<protein>
    <recommendedName>
        <fullName evidence="1">Flap endonuclease 1</fullName>
        <shortName evidence="1">FEN-1</shortName>
        <ecNumber evidence="1">3.1.-.-</ecNumber>
    </recommendedName>
    <alternativeName>
        <fullName evidence="1">Flap structure-specific endonuclease 1</fullName>
    </alternativeName>
</protein>
<keyword id="KW-0227">DNA damage</keyword>
<keyword id="KW-0234">DNA repair</keyword>
<keyword id="KW-0235">DNA replication</keyword>
<keyword id="KW-0255">Endonuclease</keyword>
<keyword id="KW-0269">Exonuclease</keyword>
<keyword id="KW-0378">Hydrolase</keyword>
<keyword id="KW-0460">Magnesium</keyword>
<keyword id="KW-0479">Metal-binding</keyword>
<keyword id="KW-0496">Mitochondrion</keyword>
<keyword id="KW-0540">Nuclease</keyword>
<keyword id="KW-0539">Nucleus</keyword>
<keyword id="KW-0597">Phosphoprotein</keyword>
<reference key="1">
    <citation type="journal article" date="2007" name="Nature">
        <title>Evolution of genes and genomes on the Drosophila phylogeny.</title>
        <authorList>
            <consortium name="Drosophila 12 genomes consortium"/>
        </authorList>
    </citation>
    <scope>NUCLEOTIDE SEQUENCE [LARGE SCALE GENOMIC DNA]</scope>
    <source>
        <strain>Tucson 14021-0224.01</strain>
    </source>
</reference>
<organism>
    <name type="scientific">Drosophila erecta</name>
    <name type="common">Fruit fly</name>
    <dbReference type="NCBI Taxonomy" id="7220"/>
    <lineage>
        <taxon>Eukaryota</taxon>
        <taxon>Metazoa</taxon>
        <taxon>Ecdysozoa</taxon>
        <taxon>Arthropoda</taxon>
        <taxon>Hexapoda</taxon>
        <taxon>Insecta</taxon>
        <taxon>Pterygota</taxon>
        <taxon>Neoptera</taxon>
        <taxon>Endopterygota</taxon>
        <taxon>Diptera</taxon>
        <taxon>Brachycera</taxon>
        <taxon>Muscomorpha</taxon>
        <taxon>Ephydroidea</taxon>
        <taxon>Drosophilidae</taxon>
        <taxon>Drosophila</taxon>
        <taxon>Sophophora</taxon>
    </lineage>
</organism>
<sequence length="387" mass="43093">MGILGLSKLIADLAPQAIRESEMKHFFGRKVAIDASMCLYQFLIAVRSEGAQLATVNGDPTSHLMGMFYRTIRLLDNGIKPVYVFDGKPPDLKSGELAKRAERREEAEKALKAATDAGDDAGIEKFNRRLVRVTKEHAKEAKELLTLMGVPYVDAPCEAEAQCAALVKAGKVYATATEDMDALTFGSTKLLRYLTYSEARKMPVKEFSYDKLLEGLSINSREFIDLCILLGCDYCESIKGIGPKRAIELINNYRDIETILDNLDSSKYTVPENWNYKVARELFIEPEVANAESIDLKWVEPDEEGLVKFLCGDRQFSEERVRNGAKKLMKSKQAQTQVRLDSFFKTLPSTPNATNAAKRKAEEAKKSANNKKAKTSGGVGGRGRRPK</sequence>
<feature type="chain" id="PRO_0000403498" description="Flap endonuclease 1">
    <location>
        <begin position="1"/>
        <end position="387"/>
    </location>
</feature>
<feature type="region of interest" description="N-domain">
    <location>
        <begin position="1"/>
        <end position="104"/>
    </location>
</feature>
<feature type="region of interest" description="I-domain">
    <location>
        <begin position="122"/>
        <end position="253"/>
    </location>
</feature>
<feature type="region of interest" description="Interaction with PCNA" evidence="1">
    <location>
        <begin position="336"/>
        <end position="344"/>
    </location>
</feature>
<feature type="region of interest" description="Disordered" evidence="2">
    <location>
        <begin position="346"/>
        <end position="387"/>
    </location>
</feature>
<feature type="binding site" evidence="1">
    <location>
        <position position="34"/>
    </location>
    <ligand>
        <name>Mg(2+)</name>
        <dbReference type="ChEBI" id="CHEBI:18420"/>
        <label>1</label>
    </ligand>
</feature>
<feature type="binding site" evidence="1">
    <location>
        <position position="47"/>
    </location>
    <ligand>
        <name>DNA</name>
        <dbReference type="ChEBI" id="CHEBI:16991"/>
    </ligand>
</feature>
<feature type="binding site" evidence="1">
    <location>
        <position position="70"/>
    </location>
    <ligand>
        <name>DNA</name>
        <dbReference type="ChEBI" id="CHEBI:16991"/>
    </ligand>
</feature>
<feature type="binding site" evidence="1">
    <location>
        <position position="86"/>
    </location>
    <ligand>
        <name>Mg(2+)</name>
        <dbReference type="ChEBI" id="CHEBI:18420"/>
        <label>1</label>
    </ligand>
</feature>
<feature type="binding site" evidence="1">
    <location>
        <position position="158"/>
    </location>
    <ligand>
        <name>DNA</name>
        <dbReference type="ChEBI" id="CHEBI:16991"/>
    </ligand>
</feature>
<feature type="binding site" evidence="1">
    <location>
        <position position="158"/>
    </location>
    <ligand>
        <name>Mg(2+)</name>
        <dbReference type="ChEBI" id="CHEBI:18420"/>
        <label>1</label>
    </ligand>
</feature>
<feature type="binding site" evidence="1">
    <location>
        <position position="160"/>
    </location>
    <ligand>
        <name>Mg(2+)</name>
        <dbReference type="ChEBI" id="CHEBI:18420"/>
        <label>1</label>
    </ligand>
</feature>
<feature type="binding site" evidence="1">
    <location>
        <position position="179"/>
    </location>
    <ligand>
        <name>Mg(2+)</name>
        <dbReference type="ChEBI" id="CHEBI:18420"/>
        <label>2</label>
    </ligand>
</feature>
<feature type="binding site" evidence="1">
    <location>
        <position position="181"/>
    </location>
    <ligand>
        <name>Mg(2+)</name>
        <dbReference type="ChEBI" id="CHEBI:18420"/>
        <label>2</label>
    </ligand>
</feature>
<feature type="binding site" evidence="1">
    <location>
        <position position="231"/>
    </location>
    <ligand>
        <name>DNA</name>
        <dbReference type="ChEBI" id="CHEBI:16991"/>
    </ligand>
</feature>
<feature type="binding site" evidence="1">
    <location>
        <position position="233"/>
    </location>
    <ligand>
        <name>DNA</name>
        <dbReference type="ChEBI" id="CHEBI:16991"/>
    </ligand>
</feature>
<feature type="binding site" evidence="1">
    <location>
        <position position="233"/>
    </location>
    <ligand>
        <name>Mg(2+)</name>
        <dbReference type="ChEBI" id="CHEBI:18420"/>
        <label>2</label>
    </ligand>
</feature>
<name>FEN1_DROER</name>
<comment type="function">
    <text evidence="1">Structure-specific nuclease with 5'-flap endonuclease and 5'-3' exonuclease activities involved in DNA replication and repair. During DNA replication, cleaves the 5'-overhanging flap structure that is generated by displacement synthesis when DNA polymerase encounters the 5'-end of a downstream Okazaki fragment. It enters the flap from the 5'-end and then tracks to cleave the flap base, leaving a nick for ligation. Also involved in the long patch base excision repair (LP-BER) pathway, by cleaving within the apurinic/apyrimidinic (AP) site-terminated flap. Acts as a genome stabilization factor that prevents flaps from equilibrating into structures that lead to duplications and deletions. Also possesses 5'-3' exonuclease activity on nicked or gapped double-stranded DNA, and exhibits RNase H activity. Also involved in replication and repair of rDNA and in repairing mitochondrial DNA.</text>
</comment>
<comment type="cofactor">
    <cofactor evidence="1">
        <name>Mg(2+)</name>
        <dbReference type="ChEBI" id="CHEBI:18420"/>
    </cofactor>
    <text evidence="1">Binds 2 magnesium ions per subunit. They probably participate in the reaction catalyzed by the enzyme. May bind an additional third magnesium ion after substrate binding.</text>
</comment>
<comment type="subunit">
    <text evidence="1">Interacts with PCNA. Three molecules of FEN1 bind to one PCNA trimer with each molecule binding to one PCNA monomer. PCNA stimulates the nuclease activity without altering cleavage specificity.</text>
</comment>
<comment type="subcellular location">
    <subcellularLocation>
        <location evidence="1">Nucleus</location>
        <location evidence="1">Nucleolus</location>
    </subcellularLocation>
    <subcellularLocation>
        <location evidence="1">Nucleus</location>
        <location evidence="1">Nucleoplasm</location>
    </subcellularLocation>
    <subcellularLocation>
        <location evidence="1">Mitochondrion</location>
    </subcellularLocation>
    <text evidence="1">Resides mostly in the nucleoli and relocalizes to the nucleoplasm upon DNA damage.</text>
</comment>
<comment type="PTM">
    <text evidence="1">Phosphorylated. Phosphorylation upon DNA damage induces relocalization to the nuclear plasma.</text>
</comment>
<comment type="similarity">
    <text evidence="1">Belongs to the XPG/RAD2 endonuclease family. FEN1 subfamily.</text>
</comment>
<proteinExistence type="inferred from homology"/>
<evidence type="ECO:0000255" key="1">
    <source>
        <dbReference type="HAMAP-Rule" id="MF_03140"/>
    </source>
</evidence>
<evidence type="ECO:0000256" key="2">
    <source>
        <dbReference type="SAM" id="MobiDB-lite"/>
    </source>
</evidence>
<dbReference type="EC" id="3.1.-.-" evidence="1"/>
<dbReference type="EMBL" id="CH954179">
    <property type="protein sequence ID" value="EDV55700.1"/>
    <property type="molecule type" value="Genomic_DNA"/>
</dbReference>
<dbReference type="SMR" id="B3NP61"/>
<dbReference type="EnsemblMetazoa" id="FBtr0142294">
    <property type="protein sequence ID" value="FBpp0140786"/>
    <property type="gene ID" value="FBgn0114413"/>
</dbReference>
<dbReference type="EnsemblMetazoa" id="XM_001975264.3">
    <property type="protein sequence ID" value="XP_001975300.1"/>
    <property type="gene ID" value="LOC6548486"/>
</dbReference>
<dbReference type="GeneID" id="6548486"/>
<dbReference type="KEGG" id="der:6548486"/>
<dbReference type="CTD" id="2237"/>
<dbReference type="eggNOG" id="KOG2519">
    <property type="taxonomic scope" value="Eukaryota"/>
</dbReference>
<dbReference type="HOGENOM" id="CLU_032444_2_0_1"/>
<dbReference type="OMA" id="MGIPWVQ"/>
<dbReference type="OrthoDB" id="1937206at2759"/>
<dbReference type="PhylomeDB" id="B3NP61"/>
<dbReference type="Proteomes" id="UP000008711">
    <property type="component" value="Unassembled WGS sequence"/>
</dbReference>
<dbReference type="GO" id="GO:0005739">
    <property type="term" value="C:mitochondrion"/>
    <property type="evidence" value="ECO:0007669"/>
    <property type="project" value="UniProtKB-SubCell"/>
</dbReference>
<dbReference type="GO" id="GO:0005730">
    <property type="term" value="C:nucleolus"/>
    <property type="evidence" value="ECO:0007669"/>
    <property type="project" value="UniProtKB-SubCell"/>
</dbReference>
<dbReference type="GO" id="GO:0005654">
    <property type="term" value="C:nucleoplasm"/>
    <property type="evidence" value="ECO:0007669"/>
    <property type="project" value="UniProtKB-SubCell"/>
</dbReference>
<dbReference type="GO" id="GO:0008409">
    <property type="term" value="F:5'-3' exonuclease activity"/>
    <property type="evidence" value="ECO:0007669"/>
    <property type="project" value="UniProtKB-UniRule"/>
</dbReference>
<dbReference type="GO" id="GO:0017108">
    <property type="term" value="F:5'-flap endonuclease activity"/>
    <property type="evidence" value="ECO:0007669"/>
    <property type="project" value="UniProtKB-UniRule"/>
</dbReference>
<dbReference type="GO" id="GO:0003677">
    <property type="term" value="F:DNA binding"/>
    <property type="evidence" value="ECO:0007669"/>
    <property type="project" value="UniProtKB-UniRule"/>
</dbReference>
<dbReference type="GO" id="GO:0000287">
    <property type="term" value="F:magnesium ion binding"/>
    <property type="evidence" value="ECO:0007669"/>
    <property type="project" value="UniProtKB-UniRule"/>
</dbReference>
<dbReference type="GO" id="GO:0030145">
    <property type="term" value="F:manganese ion binding"/>
    <property type="evidence" value="ECO:0007669"/>
    <property type="project" value="TreeGrafter"/>
</dbReference>
<dbReference type="GO" id="GO:0004523">
    <property type="term" value="F:RNA-DNA hybrid ribonuclease activity"/>
    <property type="evidence" value="ECO:0007669"/>
    <property type="project" value="TreeGrafter"/>
</dbReference>
<dbReference type="GO" id="GO:0006284">
    <property type="term" value="P:base-excision repair"/>
    <property type="evidence" value="ECO:0007669"/>
    <property type="project" value="UniProtKB-UniRule"/>
</dbReference>
<dbReference type="GO" id="GO:0043137">
    <property type="term" value="P:DNA replication, removal of RNA primer"/>
    <property type="evidence" value="ECO:0007669"/>
    <property type="project" value="UniProtKB-UniRule"/>
</dbReference>
<dbReference type="CDD" id="cd09867">
    <property type="entry name" value="PIN_FEN1"/>
    <property type="match status" value="1"/>
</dbReference>
<dbReference type="FunFam" id="1.10.150.20:FF:000009">
    <property type="entry name" value="Flap endonuclease 1"/>
    <property type="match status" value="1"/>
</dbReference>
<dbReference type="FunFam" id="3.40.50.1010:FF:000003">
    <property type="entry name" value="Flap endonuclease 1"/>
    <property type="match status" value="1"/>
</dbReference>
<dbReference type="Gene3D" id="1.10.150.20">
    <property type="entry name" value="5' to 3' exonuclease, C-terminal subdomain"/>
    <property type="match status" value="1"/>
</dbReference>
<dbReference type="Gene3D" id="3.40.50.1010">
    <property type="entry name" value="5'-nuclease"/>
    <property type="match status" value="1"/>
</dbReference>
<dbReference type="HAMAP" id="MF_00614">
    <property type="entry name" value="Fen"/>
    <property type="match status" value="1"/>
</dbReference>
<dbReference type="InterPro" id="IPR036279">
    <property type="entry name" value="5-3_exonuclease_C_sf"/>
</dbReference>
<dbReference type="InterPro" id="IPR023426">
    <property type="entry name" value="Flap_endonuc"/>
</dbReference>
<dbReference type="InterPro" id="IPR008918">
    <property type="entry name" value="HhH2"/>
</dbReference>
<dbReference type="InterPro" id="IPR029060">
    <property type="entry name" value="PIN-like_dom_sf"/>
</dbReference>
<dbReference type="InterPro" id="IPR006086">
    <property type="entry name" value="XPG-I_dom"/>
</dbReference>
<dbReference type="InterPro" id="IPR006084">
    <property type="entry name" value="XPG/Rad2"/>
</dbReference>
<dbReference type="InterPro" id="IPR019974">
    <property type="entry name" value="XPG_CS"/>
</dbReference>
<dbReference type="InterPro" id="IPR006085">
    <property type="entry name" value="XPG_DNA_repair_N"/>
</dbReference>
<dbReference type="PANTHER" id="PTHR11081:SF9">
    <property type="entry name" value="FLAP ENDONUCLEASE 1"/>
    <property type="match status" value="1"/>
</dbReference>
<dbReference type="PANTHER" id="PTHR11081">
    <property type="entry name" value="FLAP ENDONUCLEASE FAMILY MEMBER"/>
    <property type="match status" value="1"/>
</dbReference>
<dbReference type="Pfam" id="PF00867">
    <property type="entry name" value="XPG_I"/>
    <property type="match status" value="1"/>
</dbReference>
<dbReference type="Pfam" id="PF00752">
    <property type="entry name" value="XPG_N"/>
    <property type="match status" value="1"/>
</dbReference>
<dbReference type="PRINTS" id="PR00853">
    <property type="entry name" value="XPGRADSUPER"/>
</dbReference>
<dbReference type="SMART" id="SM00279">
    <property type="entry name" value="HhH2"/>
    <property type="match status" value="1"/>
</dbReference>
<dbReference type="SMART" id="SM00484">
    <property type="entry name" value="XPGI"/>
    <property type="match status" value="1"/>
</dbReference>
<dbReference type="SMART" id="SM00485">
    <property type="entry name" value="XPGN"/>
    <property type="match status" value="1"/>
</dbReference>
<dbReference type="SUPFAM" id="SSF47807">
    <property type="entry name" value="5' to 3' exonuclease, C-terminal subdomain"/>
    <property type="match status" value="1"/>
</dbReference>
<dbReference type="SUPFAM" id="SSF88723">
    <property type="entry name" value="PIN domain-like"/>
    <property type="match status" value="1"/>
</dbReference>
<dbReference type="PROSITE" id="PS00841">
    <property type="entry name" value="XPG_1"/>
    <property type="match status" value="1"/>
</dbReference>
<dbReference type="PROSITE" id="PS00842">
    <property type="entry name" value="XPG_2"/>
    <property type="match status" value="1"/>
</dbReference>
<gene>
    <name evidence="1" type="primary">Fen1</name>
    <name type="ORF">GG22240</name>
</gene>
<accession>B3NP61</accession>